<feature type="signal peptide" evidence="2">
    <location>
        <begin position="1"/>
        <end position="21"/>
    </location>
</feature>
<feature type="chain" id="PRO_0000386579" description="Protein cueball" evidence="2">
    <location>
        <begin position="22"/>
        <end position="651"/>
    </location>
</feature>
<feature type="topological domain" description="Extracellular" evidence="2">
    <location>
        <begin position="22"/>
        <end position="540"/>
    </location>
</feature>
<feature type="transmembrane region" description="Helical" evidence="2">
    <location>
        <begin position="541"/>
        <end position="561"/>
    </location>
</feature>
<feature type="topological domain" description="Cytoplasmic" evidence="2">
    <location>
        <begin position="562"/>
        <end position="651"/>
    </location>
</feature>
<feature type="repeat" description="LDL-receptor class B 1" evidence="2">
    <location>
        <begin position="115"/>
        <end position="162"/>
    </location>
</feature>
<feature type="repeat" description="LDL-receptor class B 2" evidence="2">
    <location>
        <begin position="163"/>
        <end position="207"/>
    </location>
</feature>
<feature type="repeat" description="LDL-receptor class B 3" evidence="2">
    <location>
        <begin position="208"/>
        <end position="253"/>
    </location>
</feature>
<feature type="domain" description="EGF-like 1" evidence="3">
    <location>
        <begin position="374"/>
        <end position="408"/>
    </location>
</feature>
<feature type="domain" description="EGF-like 2" evidence="3">
    <location>
        <begin position="409"/>
        <end position="440"/>
    </location>
</feature>
<feature type="domain" description="EGF-like 3" evidence="3">
    <location>
        <begin position="443"/>
        <end position="480"/>
    </location>
</feature>
<feature type="region of interest" description="Disordered" evidence="4">
    <location>
        <begin position="290"/>
        <end position="311"/>
    </location>
</feature>
<feature type="glycosylation site" description="N-linked (GlcNAc...) asparagine" evidence="2">
    <location>
        <position position="77"/>
    </location>
</feature>
<feature type="glycosylation site" description="N-linked (GlcNAc...) asparagine" evidence="2">
    <location>
        <position position="102"/>
    </location>
</feature>
<feature type="glycosylation site" description="N-linked (GlcNAc...) asparagine" evidence="2">
    <location>
        <position position="114"/>
    </location>
</feature>
<feature type="glycosylation site" description="N-linked (GlcNAc...) asparagine" evidence="2">
    <location>
        <position position="183"/>
    </location>
</feature>
<feature type="glycosylation site" description="N-linked (GlcNAc...) asparagine" evidence="2">
    <location>
        <position position="324"/>
    </location>
</feature>
<feature type="glycosylation site" description="N-linked (GlcNAc...) asparagine" evidence="2">
    <location>
        <position position="482"/>
    </location>
</feature>
<feature type="glycosylation site" description="N-linked (GlcNAc...) asparagine" evidence="2">
    <location>
        <position position="499"/>
    </location>
</feature>
<feature type="disulfide bond" evidence="3">
    <location>
        <begin position="383"/>
        <end position="396"/>
    </location>
</feature>
<feature type="disulfide bond" evidence="3">
    <location>
        <begin position="398"/>
        <end position="407"/>
    </location>
</feature>
<feature type="disulfide bond" evidence="3">
    <location>
        <begin position="412"/>
        <end position="421"/>
    </location>
</feature>
<feature type="disulfide bond" evidence="3">
    <location>
        <begin position="416"/>
        <end position="431"/>
    </location>
</feature>
<feature type="disulfide bond" evidence="3">
    <location>
        <begin position="447"/>
        <end position="457"/>
    </location>
</feature>
<feature type="disulfide bond" evidence="3">
    <location>
        <begin position="451"/>
        <end position="468"/>
    </location>
</feature>
<feature type="disulfide bond" evidence="3">
    <location>
        <begin position="470"/>
        <end position="479"/>
    </location>
</feature>
<proteinExistence type="inferred from homology"/>
<comment type="function">
    <text evidence="1">Has a role in spermatogenesis and oogenesis.</text>
</comment>
<comment type="subcellular location">
    <subcellularLocation>
        <location evidence="5">Cell membrane</location>
        <topology evidence="5">Single-pass type I membrane protein</topology>
    </subcellularLocation>
</comment>
<comment type="similarity">
    <text evidence="5">Belongs to the cueball family.</text>
</comment>
<organism>
    <name type="scientific">Drosophila willistoni</name>
    <name type="common">Fruit fly</name>
    <dbReference type="NCBI Taxonomy" id="7260"/>
    <lineage>
        <taxon>Eukaryota</taxon>
        <taxon>Metazoa</taxon>
        <taxon>Ecdysozoa</taxon>
        <taxon>Arthropoda</taxon>
        <taxon>Hexapoda</taxon>
        <taxon>Insecta</taxon>
        <taxon>Pterygota</taxon>
        <taxon>Neoptera</taxon>
        <taxon>Endopterygota</taxon>
        <taxon>Diptera</taxon>
        <taxon>Brachycera</taxon>
        <taxon>Muscomorpha</taxon>
        <taxon>Ephydroidea</taxon>
        <taxon>Drosophilidae</taxon>
        <taxon>Drosophila</taxon>
        <taxon>Sophophora</taxon>
    </lineage>
</organism>
<protein>
    <recommendedName>
        <fullName evidence="1">Protein cueball</fullName>
    </recommendedName>
</protein>
<reference evidence="6" key="1">
    <citation type="journal article" date="2007" name="Nature">
        <title>Evolution of genes and genomes on the Drosophila phylogeny.</title>
        <authorList>
            <consortium name="Drosophila 12 genomes consortium"/>
        </authorList>
    </citation>
    <scope>NUCLEOTIDE SEQUENCE [LARGE SCALE GENOMIC DNA]</scope>
    <source>
        <strain evidence="6">Tucson 14030-0811.24</strain>
    </source>
</reference>
<accession>B4MLE8</accession>
<keyword id="KW-1003">Cell membrane</keyword>
<keyword id="KW-0221">Differentiation</keyword>
<keyword id="KW-1015">Disulfide bond</keyword>
<keyword id="KW-0245">EGF-like domain</keyword>
<keyword id="KW-0325">Glycoprotein</keyword>
<keyword id="KW-0472">Membrane</keyword>
<keyword id="KW-0896">Oogenesis</keyword>
<keyword id="KW-1185">Reference proteome</keyword>
<keyword id="KW-0677">Repeat</keyword>
<keyword id="KW-0732">Signal</keyword>
<keyword id="KW-0744">Spermatogenesis</keyword>
<keyword id="KW-0812">Transmembrane</keyword>
<keyword id="KW-1133">Transmembrane helix</keyword>
<dbReference type="EMBL" id="CH963847">
    <property type="protein sequence ID" value="EDW72804.1"/>
    <property type="molecule type" value="Genomic_DNA"/>
</dbReference>
<dbReference type="SMR" id="B4MLE8"/>
<dbReference type="STRING" id="7260.B4MLE8"/>
<dbReference type="GlyCosmos" id="B4MLE8">
    <property type="glycosylation" value="7 sites, No reported glycans"/>
</dbReference>
<dbReference type="EnsemblMetazoa" id="FBtr0247854">
    <property type="protein sequence ID" value="FBpp0246346"/>
    <property type="gene ID" value="FBgn0219202"/>
</dbReference>
<dbReference type="EnsemblMetazoa" id="XM_002061782.4">
    <property type="protein sequence ID" value="XP_002061818.1"/>
    <property type="gene ID" value="LOC6638883"/>
</dbReference>
<dbReference type="GeneID" id="6638883"/>
<dbReference type="KEGG" id="dwi:6638883"/>
<dbReference type="eggNOG" id="KOG1215">
    <property type="taxonomic scope" value="Eukaryota"/>
</dbReference>
<dbReference type="HOGENOM" id="CLU_026602_0_0_1"/>
<dbReference type="OMA" id="RCEQNST"/>
<dbReference type="OrthoDB" id="382013at2759"/>
<dbReference type="PhylomeDB" id="B4MLE8"/>
<dbReference type="Proteomes" id="UP000007798">
    <property type="component" value="Unassembled WGS sequence"/>
</dbReference>
<dbReference type="GO" id="GO:0005886">
    <property type="term" value="C:plasma membrane"/>
    <property type="evidence" value="ECO:0007669"/>
    <property type="project" value="UniProtKB-SubCell"/>
</dbReference>
<dbReference type="GO" id="GO:0042813">
    <property type="term" value="F:Wnt receptor activity"/>
    <property type="evidence" value="ECO:0007669"/>
    <property type="project" value="TreeGrafter"/>
</dbReference>
<dbReference type="GO" id="GO:0017147">
    <property type="term" value="F:Wnt-protein binding"/>
    <property type="evidence" value="ECO:0007669"/>
    <property type="project" value="TreeGrafter"/>
</dbReference>
<dbReference type="GO" id="GO:0060070">
    <property type="term" value="P:canonical Wnt signaling pathway"/>
    <property type="evidence" value="ECO:0007669"/>
    <property type="project" value="TreeGrafter"/>
</dbReference>
<dbReference type="GO" id="GO:0048477">
    <property type="term" value="P:oogenesis"/>
    <property type="evidence" value="ECO:0007669"/>
    <property type="project" value="UniProtKB-KW"/>
</dbReference>
<dbReference type="GO" id="GO:0045938">
    <property type="term" value="P:positive regulation of circadian sleep/wake cycle, sleep"/>
    <property type="evidence" value="ECO:0007669"/>
    <property type="project" value="EnsemblMetazoa"/>
</dbReference>
<dbReference type="GO" id="GO:0007283">
    <property type="term" value="P:spermatogenesis"/>
    <property type="evidence" value="ECO:0007669"/>
    <property type="project" value="UniProtKB-KW"/>
</dbReference>
<dbReference type="GO" id="GO:0070328">
    <property type="term" value="P:triglyceride homeostasis"/>
    <property type="evidence" value="ECO:0007669"/>
    <property type="project" value="EnsemblMetazoa"/>
</dbReference>
<dbReference type="CDD" id="cd00054">
    <property type="entry name" value="EGF_CA"/>
    <property type="match status" value="1"/>
</dbReference>
<dbReference type="Gene3D" id="2.10.25.10">
    <property type="entry name" value="Laminin"/>
    <property type="match status" value="2"/>
</dbReference>
<dbReference type="Gene3D" id="2.120.10.30">
    <property type="entry name" value="TolB, C-terminal domain"/>
    <property type="match status" value="1"/>
</dbReference>
<dbReference type="InterPro" id="IPR011042">
    <property type="entry name" value="6-blade_b-propeller_TolB-like"/>
</dbReference>
<dbReference type="InterPro" id="IPR050778">
    <property type="entry name" value="Cueball_EGF_LRP_Nidogen"/>
</dbReference>
<dbReference type="InterPro" id="IPR000742">
    <property type="entry name" value="EGF-like_dom"/>
</dbReference>
<dbReference type="InterPro" id="IPR000033">
    <property type="entry name" value="LDLR_classB_rpt"/>
</dbReference>
<dbReference type="PANTHER" id="PTHR46513:SF42">
    <property type="entry name" value="PROTEIN CUEBALL"/>
    <property type="match status" value="1"/>
</dbReference>
<dbReference type="PANTHER" id="PTHR46513">
    <property type="entry name" value="VITELLOGENIN RECEPTOR-LIKE PROTEIN-RELATED-RELATED"/>
    <property type="match status" value="1"/>
</dbReference>
<dbReference type="Pfam" id="PF00058">
    <property type="entry name" value="Ldl_recept_b"/>
    <property type="match status" value="1"/>
</dbReference>
<dbReference type="SMART" id="SM00181">
    <property type="entry name" value="EGF"/>
    <property type="match status" value="3"/>
</dbReference>
<dbReference type="SMART" id="SM00135">
    <property type="entry name" value="LY"/>
    <property type="match status" value="3"/>
</dbReference>
<dbReference type="SUPFAM" id="SSF57196">
    <property type="entry name" value="EGF/Laminin"/>
    <property type="match status" value="2"/>
</dbReference>
<dbReference type="SUPFAM" id="SSF63825">
    <property type="entry name" value="YWTD domain"/>
    <property type="match status" value="1"/>
</dbReference>
<dbReference type="PROSITE" id="PS00022">
    <property type="entry name" value="EGF_1"/>
    <property type="match status" value="3"/>
</dbReference>
<dbReference type="PROSITE" id="PS01186">
    <property type="entry name" value="EGF_2"/>
    <property type="match status" value="2"/>
</dbReference>
<dbReference type="PROSITE" id="PS50026">
    <property type="entry name" value="EGF_3"/>
    <property type="match status" value="3"/>
</dbReference>
<dbReference type="PROSITE" id="PS51120">
    <property type="entry name" value="LDLRB"/>
    <property type="match status" value="3"/>
</dbReference>
<name>CUE_DROWI</name>
<gene>
    <name evidence="1" type="primary">cue</name>
    <name type="ORF">GK17203</name>
</gene>
<evidence type="ECO:0000250" key="1">
    <source>
        <dbReference type="UniProtKB" id="Q95RU0"/>
    </source>
</evidence>
<evidence type="ECO:0000255" key="2"/>
<evidence type="ECO:0000255" key="3">
    <source>
        <dbReference type="PROSITE-ProRule" id="PRU00076"/>
    </source>
</evidence>
<evidence type="ECO:0000256" key="4">
    <source>
        <dbReference type="SAM" id="MobiDB-lite"/>
    </source>
</evidence>
<evidence type="ECO:0000305" key="5"/>
<evidence type="ECO:0000312" key="6">
    <source>
        <dbReference type="EMBL" id="EDW72804.1"/>
    </source>
</evidence>
<sequence length="651" mass="73571">MILRLFILLSIITVYLQLSVGIQQQFEFAITLKSKILFVDEHWNVVNTAAHEFDELSALTFDESEERIYFNDGQHQNSSIFSLRKVGKSNHLAEQTIQRYGNESVGGIAYDPLNRTIYWSDLLQKKIFYASIDTVATEMPKILVDLSEENGTPYGVAIDICGRKLYWTNSNINHPTVERIDLNGTGRLAIIDKNIDSPRGIVVDQGAKRIFWIDDLKGIFFAVMSAQLDGSDVKLVLKDKNHEPQNLAVTRNAIYWTDRTTKSVWSHLKEPEIATTTTTTTTSTTQIPTVEGEEGTGAMDDNDIWPVGDFETTPKKSPLERKINLTEEARGIVARTGFYQLQKDSQCSKVIQLVKQRLDESQQNNRVLNVVDEQLDELQREHCLGGGTYYPQQKFCVCVPGYKGTRCETNECHNFCVHGTCQISEMGYPKCYCQPGYSGERCEVKKCLNFCQNGGDCQLDELTGEASCQCPSNFGGLRCEHNSTEICGLFCRLLKHDSNTSVPFGCHDICEQLAKDSSDLIAIPEYKHLDVCLAPNAWTGSVLMPLMISLILILLLLTIFIHGLRRLYKPKRPHIKKTFVVRKQARTNSSSDTPLTNRPLATEQCEITIENCCNMNICETPCFDPKLVEFAKSNCKDDKKILIHNMEDDLY</sequence>